<proteinExistence type="inferred from homology"/>
<dbReference type="EMBL" id="AM889285">
    <property type="protein sequence ID" value="CAP57332.1"/>
    <property type="molecule type" value="Genomic_DNA"/>
</dbReference>
<dbReference type="EMBL" id="CP001189">
    <property type="protein sequence ID" value="ACI52711.1"/>
    <property type="molecule type" value="Genomic_DNA"/>
</dbReference>
<dbReference type="RefSeq" id="WP_012227935.1">
    <property type="nucleotide sequence ID" value="NC_010125.1"/>
</dbReference>
<dbReference type="SMR" id="A9H3L8"/>
<dbReference type="STRING" id="272568.GDI3389"/>
<dbReference type="KEGG" id="gdi:GDI3389"/>
<dbReference type="KEGG" id="gdj:Gdia_2981"/>
<dbReference type="eggNOG" id="COG0097">
    <property type="taxonomic scope" value="Bacteria"/>
</dbReference>
<dbReference type="HOGENOM" id="CLU_065464_1_2_5"/>
<dbReference type="OrthoDB" id="9805007at2"/>
<dbReference type="Proteomes" id="UP000001176">
    <property type="component" value="Chromosome"/>
</dbReference>
<dbReference type="GO" id="GO:0022625">
    <property type="term" value="C:cytosolic large ribosomal subunit"/>
    <property type="evidence" value="ECO:0007669"/>
    <property type="project" value="TreeGrafter"/>
</dbReference>
<dbReference type="GO" id="GO:0019843">
    <property type="term" value="F:rRNA binding"/>
    <property type="evidence" value="ECO:0007669"/>
    <property type="project" value="UniProtKB-UniRule"/>
</dbReference>
<dbReference type="GO" id="GO:0003735">
    <property type="term" value="F:structural constituent of ribosome"/>
    <property type="evidence" value="ECO:0007669"/>
    <property type="project" value="InterPro"/>
</dbReference>
<dbReference type="GO" id="GO:0002181">
    <property type="term" value="P:cytoplasmic translation"/>
    <property type="evidence" value="ECO:0007669"/>
    <property type="project" value="TreeGrafter"/>
</dbReference>
<dbReference type="FunFam" id="3.90.930.12:FF:000001">
    <property type="entry name" value="50S ribosomal protein L6"/>
    <property type="match status" value="1"/>
</dbReference>
<dbReference type="Gene3D" id="3.90.930.12">
    <property type="entry name" value="Ribosomal protein L6, alpha-beta domain"/>
    <property type="match status" value="2"/>
</dbReference>
<dbReference type="HAMAP" id="MF_01365_B">
    <property type="entry name" value="Ribosomal_uL6_B"/>
    <property type="match status" value="1"/>
</dbReference>
<dbReference type="InterPro" id="IPR000702">
    <property type="entry name" value="Ribosomal_uL6-like"/>
</dbReference>
<dbReference type="InterPro" id="IPR036789">
    <property type="entry name" value="Ribosomal_uL6-like_a/b-dom_sf"/>
</dbReference>
<dbReference type="InterPro" id="IPR020040">
    <property type="entry name" value="Ribosomal_uL6_a/b-dom"/>
</dbReference>
<dbReference type="InterPro" id="IPR019906">
    <property type="entry name" value="Ribosomal_uL6_bac-type"/>
</dbReference>
<dbReference type="InterPro" id="IPR002358">
    <property type="entry name" value="Ribosomal_uL6_CS"/>
</dbReference>
<dbReference type="NCBIfam" id="TIGR03654">
    <property type="entry name" value="L6_bact"/>
    <property type="match status" value="1"/>
</dbReference>
<dbReference type="PANTHER" id="PTHR11655">
    <property type="entry name" value="60S/50S RIBOSOMAL PROTEIN L6/L9"/>
    <property type="match status" value="1"/>
</dbReference>
<dbReference type="PANTHER" id="PTHR11655:SF14">
    <property type="entry name" value="LARGE RIBOSOMAL SUBUNIT PROTEIN UL6M"/>
    <property type="match status" value="1"/>
</dbReference>
<dbReference type="Pfam" id="PF00347">
    <property type="entry name" value="Ribosomal_L6"/>
    <property type="match status" value="2"/>
</dbReference>
<dbReference type="PIRSF" id="PIRSF002162">
    <property type="entry name" value="Ribosomal_L6"/>
    <property type="match status" value="1"/>
</dbReference>
<dbReference type="PRINTS" id="PR00059">
    <property type="entry name" value="RIBOSOMALL6"/>
</dbReference>
<dbReference type="SUPFAM" id="SSF56053">
    <property type="entry name" value="Ribosomal protein L6"/>
    <property type="match status" value="2"/>
</dbReference>
<dbReference type="PROSITE" id="PS00525">
    <property type="entry name" value="RIBOSOMAL_L6_1"/>
    <property type="match status" value="1"/>
</dbReference>
<keyword id="KW-1185">Reference proteome</keyword>
<keyword id="KW-0687">Ribonucleoprotein</keyword>
<keyword id="KW-0689">Ribosomal protein</keyword>
<keyword id="KW-0694">RNA-binding</keyword>
<keyword id="KW-0699">rRNA-binding</keyword>
<comment type="function">
    <text evidence="1">This protein binds to the 23S rRNA, and is important in its secondary structure. It is located near the subunit interface in the base of the L7/L12 stalk, and near the tRNA binding site of the peptidyltransferase center.</text>
</comment>
<comment type="subunit">
    <text evidence="1">Part of the 50S ribosomal subunit.</text>
</comment>
<comment type="similarity">
    <text evidence="1">Belongs to the universal ribosomal protein uL6 family.</text>
</comment>
<name>RL6_GLUDA</name>
<protein>
    <recommendedName>
        <fullName evidence="1">Large ribosomal subunit protein uL6</fullName>
    </recommendedName>
    <alternativeName>
        <fullName evidence="3">50S ribosomal protein L6</fullName>
    </alternativeName>
</protein>
<organism>
    <name type="scientific">Gluconacetobacter diazotrophicus (strain ATCC 49037 / DSM 5601 / CCUG 37298 / CIP 103539 / LMG 7603 / PAl5)</name>
    <dbReference type="NCBI Taxonomy" id="272568"/>
    <lineage>
        <taxon>Bacteria</taxon>
        <taxon>Pseudomonadati</taxon>
        <taxon>Pseudomonadota</taxon>
        <taxon>Alphaproteobacteria</taxon>
        <taxon>Acetobacterales</taxon>
        <taxon>Acetobacteraceae</taxon>
        <taxon>Gluconacetobacter</taxon>
    </lineage>
</organism>
<evidence type="ECO:0000255" key="1">
    <source>
        <dbReference type="HAMAP-Rule" id="MF_01365"/>
    </source>
</evidence>
<evidence type="ECO:0000256" key="2">
    <source>
        <dbReference type="SAM" id="MobiDB-lite"/>
    </source>
</evidence>
<evidence type="ECO:0000305" key="3"/>
<feature type="chain" id="PRO_1000087046" description="Large ribosomal subunit protein uL6">
    <location>
        <begin position="1"/>
        <end position="177"/>
    </location>
</feature>
<feature type="region of interest" description="Disordered" evidence="2">
    <location>
        <begin position="156"/>
        <end position="177"/>
    </location>
</feature>
<feature type="compositionally biased region" description="Basic and acidic residues" evidence="2">
    <location>
        <begin position="156"/>
        <end position="171"/>
    </location>
</feature>
<gene>
    <name evidence="1" type="primary">rplF</name>
    <name type="ordered locus">GDI3389</name>
    <name type="ordered locus">Gdia_2981</name>
</gene>
<accession>A9H3L8</accession>
<accession>B5ZIH8</accession>
<sequence>MSRVGKYPVEVPSGVQVSIVDGIFVAKGKLGELKLPLSQHIEAEIADNKVSVRPVGTAAPARMMWGTTRALVASMVKGVSEGFSKTLEVTGTGYRAAVQGSNLVMNLGYSHDIVYAIPAGIKITTPRPTAIVVEGVDKQRVGQVALDIRSFRKPEPYKGKGVRYDTETIRRKEGKKK</sequence>
<reference key="1">
    <citation type="journal article" date="2009" name="BMC Genomics">
        <title>Complete genome sequence of the sugarcane nitrogen-fixing endophyte Gluconacetobacter diazotrophicus Pal5.</title>
        <authorList>
            <person name="Bertalan M."/>
            <person name="Albano R."/>
            <person name="de Padua V."/>
            <person name="Rouws L."/>
            <person name="Rojas C."/>
            <person name="Hemerly A."/>
            <person name="Teixeira K."/>
            <person name="Schwab S."/>
            <person name="Araujo J."/>
            <person name="Oliveira A."/>
            <person name="Franca L."/>
            <person name="Magalhaes V."/>
            <person name="Alqueres S."/>
            <person name="Cardoso A."/>
            <person name="Almeida W."/>
            <person name="Loureiro M.M."/>
            <person name="Nogueira E."/>
            <person name="Cidade D."/>
            <person name="Oliveira D."/>
            <person name="Simao T."/>
            <person name="Macedo J."/>
            <person name="Valadao A."/>
            <person name="Dreschsel M."/>
            <person name="Freitas F."/>
            <person name="Vidal M."/>
            <person name="Guedes H."/>
            <person name="Rodrigues E."/>
            <person name="Meneses C."/>
            <person name="Brioso P."/>
            <person name="Pozzer L."/>
            <person name="Figueiredo D."/>
            <person name="Montano H."/>
            <person name="Junior J."/>
            <person name="de Souza Filho G."/>
            <person name="Martin Quintana Flores V."/>
            <person name="Ferreira B."/>
            <person name="Branco A."/>
            <person name="Gonzalez P."/>
            <person name="Guillobel H."/>
            <person name="Lemos M."/>
            <person name="Seibel L."/>
            <person name="Macedo J."/>
            <person name="Alves-Ferreira M."/>
            <person name="Sachetto-Martins G."/>
            <person name="Coelho A."/>
            <person name="Santos E."/>
            <person name="Amaral G."/>
            <person name="Neves A."/>
            <person name="Pacheco A.B."/>
            <person name="Carvalho D."/>
            <person name="Lery L."/>
            <person name="Bisch P."/>
            <person name="Rossle S.C."/>
            <person name="Urmenyi T."/>
            <person name="Rael Pereira A."/>
            <person name="Silva R."/>
            <person name="Rondinelli E."/>
            <person name="von Kruger W."/>
            <person name="Martins O."/>
            <person name="Baldani J.I."/>
            <person name="Ferreira P.C."/>
        </authorList>
    </citation>
    <scope>NUCLEOTIDE SEQUENCE [LARGE SCALE GENOMIC DNA]</scope>
    <source>
        <strain>ATCC 49037 / DSM 5601 / CCUG 37298 / CIP 103539 / LMG 7603 / PAl5</strain>
    </source>
</reference>
<reference key="2">
    <citation type="journal article" date="2010" name="Stand. Genomic Sci.">
        <title>Two genome sequences of the same bacterial strain, Gluconacetobacter diazotrophicus PAl 5, suggest a new standard in genome sequence submission.</title>
        <authorList>
            <person name="Giongo A."/>
            <person name="Tyler H.L."/>
            <person name="Zipperer U.N."/>
            <person name="Triplett E.W."/>
        </authorList>
    </citation>
    <scope>NUCLEOTIDE SEQUENCE [LARGE SCALE GENOMIC DNA]</scope>
    <source>
        <strain>ATCC 49037 / DSM 5601 / CCUG 37298 / CIP 103539 / LMG 7603 / PAl5</strain>
    </source>
</reference>